<protein>
    <recommendedName>
        <fullName evidence="30">RB1-inducible coiled-coil protein 1</fullName>
    </recommendedName>
    <alternativeName>
        <fullName>FAK family kinase-interacting protein of 200 kDa</fullName>
        <shortName evidence="28">FIP200</shortName>
    </alternativeName>
</protein>
<keyword id="KW-0002">3D-structure</keyword>
<keyword id="KW-0025">Alternative splicing</keyword>
<keyword id="KW-0072">Autophagy</keyword>
<keyword id="KW-0131">Cell cycle</keyword>
<keyword id="KW-0175">Coiled coil</keyword>
<keyword id="KW-0963">Cytoplasm</keyword>
<keyword id="KW-0458">Lysosome</keyword>
<keyword id="KW-0539">Nucleus</keyword>
<keyword id="KW-0597">Phosphoprotein</keyword>
<keyword id="KW-1267">Proteomics identification</keyword>
<keyword id="KW-1185">Reference proteome</keyword>
<keyword id="KW-0804">Transcription</keyword>
<keyword id="KW-0805">Transcription regulation</keyword>
<keyword id="KW-0043">Tumor suppressor</keyword>
<organism>
    <name type="scientific">Homo sapiens</name>
    <name type="common">Human</name>
    <dbReference type="NCBI Taxonomy" id="9606"/>
    <lineage>
        <taxon>Eukaryota</taxon>
        <taxon>Metazoa</taxon>
        <taxon>Chordata</taxon>
        <taxon>Craniata</taxon>
        <taxon>Vertebrata</taxon>
        <taxon>Euteleostomi</taxon>
        <taxon>Mammalia</taxon>
        <taxon>Eutheria</taxon>
        <taxon>Euarchontoglires</taxon>
        <taxon>Primates</taxon>
        <taxon>Haplorrhini</taxon>
        <taxon>Catarrhini</taxon>
        <taxon>Hominidae</taxon>
        <taxon>Homo</taxon>
    </lineage>
</organism>
<name>RBCC1_HUMAN</name>
<feature type="chain" id="PRO_0000097183" description="RB1-inducible coiled-coil protein 1">
    <location>
        <begin position="1"/>
        <end position="1594"/>
    </location>
</feature>
<feature type="region of interest" description="Disordered" evidence="3">
    <location>
        <begin position="638"/>
        <end position="673"/>
    </location>
</feature>
<feature type="coiled-coil region" evidence="2">
    <location>
        <begin position="859"/>
        <end position="1397"/>
    </location>
</feature>
<feature type="coiled-coil region" evidence="2">
    <location>
        <begin position="1438"/>
        <end position="1485"/>
    </location>
</feature>
<feature type="short sequence motif" description="Nuclear localization signal" evidence="2">
    <location>
        <begin position="566"/>
        <end position="569"/>
    </location>
</feature>
<feature type="short sequence motif" description="FFAT" evidence="24">
    <location>
        <begin position="731"/>
        <end position="737"/>
    </location>
</feature>
<feature type="compositionally biased region" description="Low complexity" evidence="3">
    <location>
        <begin position="641"/>
        <end position="654"/>
    </location>
</feature>
<feature type="modified residue" description="Phosphoserine" evidence="35">
    <location>
        <position position="222"/>
    </location>
</feature>
<feature type="modified residue" description="Phosphoserine" evidence="35">
    <location>
        <position position="229"/>
    </location>
</feature>
<feature type="modified residue" description="Phosphoserine" evidence="33 35">
    <location>
        <position position="237"/>
    </location>
</feature>
<feature type="modified residue" description="Phosphothreonine" evidence="1">
    <location>
        <position position="238"/>
    </location>
</feature>
<feature type="modified residue" description="Phosphoserine" evidence="34 35">
    <location>
        <position position="243"/>
    </location>
</feature>
<feature type="modified residue" description="Phosphoserine" evidence="35">
    <location>
        <position position="253"/>
    </location>
</feature>
<feature type="modified residue" description="Phosphoserine" evidence="34 35">
    <location>
        <position position="257"/>
    </location>
</feature>
<feature type="modified residue" description="Phosphoserine" evidence="1">
    <location>
        <position position="261"/>
    </location>
</feature>
<feature type="modified residue" description="Phosphoserine" evidence="35">
    <location>
        <position position="266"/>
    </location>
</feature>
<feature type="modified residue" description="Phosphoserine" evidence="33">
    <location>
        <position position="624"/>
    </location>
</feature>
<feature type="modified residue" description="Phosphoserine" evidence="33 35">
    <location>
        <position position="647"/>
    </location>
</feature>
<feature type="modified residue" description="Phosphoserine" evidence="1">
    <location>
        <position position="650"/>
    </location>
</feature>
<feature type="modified residue" description="Phosphoserine" evidence="35">
    <location>
        <position position="652"/>
    </location>
</feature>
<feature type="modified residue" description="Phosphoserine" evidence="33">
    <location>
        <position position="653"/>
    </location>
</feature>
<feature type="modified residue" description="Phosphoserine" evidence="31">
    <location>
        <position position="734"/>
    </location>
</feature>
<feature type="modified residue" description="Phosphoserine" evidence="1">
    <location>
        <position position="1091"/>
    </location>
</feature>
<feature type="modified residue" description="Phosphoserine" evidence="35">
    <location>
        <position position="1222"/>
    </location>
</feature>
<feature type="modified residue" description="Phosphoserine" evidence="35">
    <location>
        <position position="1370"/>
    </location>
</feature>
<feature type="modified residue" description="Phosphoserine" evidence="35">
    <location>
        <position position="1484"/>
    </location>
</feature>
<feature type="splice variant" id="VSP_040097" description="In isoform 2." evidence="29">
    <location>
        <begin position="1543"/>
        <end position="1545"/>
    </location>
</feature>
<feature type="sequence variant" id="VAR_023776" description="In dbSNP:rs17337252." evidence="5 10 27">
    <original>M</original>
    <variation>T</variation>
    <location>
        <position position="234"/>
    </location>
</feature>
<feature type="sequence variant" id="VAR_051309" description="In dbSNP:rs34016926.">
    <original>P</original>
    <variation>L</variation>
    <location>
        <position position="708"/>
    </location>
</feature>
<feature type="sequence variant" id="VAR_051310" description="In dbSNP:rs35534432.">
    <original>R</original>
    <variation>K</variation>
    <location>
        <position position="1216"/>
    </location>
</feature>
<feature type="sequence variant" id="VAR_051311" description="In dbSNP:rs34701924.">
    <original>N</original>
    <variation>K</variation>
    <location>
        <position position="1314"/>
    </location>
</feature>
<feature type="sequence variant" id="VAR_051312" description="In dbSNP:rs35342973.">
    <original>S</original>
    <variation>F</variation>
    <location>
        <position position="1424"/>
    </location>
</feature>
<feature type="sequence variant" id="VAR_033031" description="In a breast cancer sample; somatic mutation; dbSNP:rs113117391." evidence="11">
    <original>R</original>
    <variation>C</variation>
    <location>
        <position position="1514"/>
    </location>
</feature>
<feature type="sequence conflict" description="In Ref. 1; BAB69690." evidence="30" ref="1">
    <original>C</original>
    <variation>R</variation>
    <location>
        <position position="1136"/>
    </location>
</feature>
<feature type="helix" evidence="39">
    <location>
        <begin position="1286"/>
        <end position="1393"/>
    </location>
</feature>
<feature type="helix" evidence="36">
    <location>
        <begin position="1458"/>
        <end position="1486"/>
    </location>
</feature>
<feature type="strand" evidence="38">
    <location>
        <begin position="1495"/>
        <end position="1497"/>
    </location>
</feature>
<feature type="strand" evidence="37">
    <location>
        <begin position="1506"/>
        <end position="1512"/>
    </location>
</feature>
<feature type="turn" evidence="37">
    <location>
        <begin position="1513"/>
        <end position="1516"/>
    </location>
</feature>
<feature type="strand" evidence="37">
    <location>
        <begin position="1517"/>
        <end position="1520"/>
    </location>
</feature>
<feature type="strand" evidence="37">
    <location>
        <begin position="1523"/>
        <end position="1526"/>
    </location>
</feature>
<feature type="strand" evidence="37">
    <location>
        <begin position="1528"/>
        <end position="1530"/>
    </location>
</feature>
<feature type="helix" evidence="37">
    <location>
        <begin position="1532"/>
        <end position="1534"/>
    </location>
</feature>
<feature type="helix" evidence="37">
    <location>
        <begin position="1536"/>
        <end position="1538"/>
    </location>
</feature>
<feature type="strand" evidence="40">
    <location>
        <begin position="1545"/>
        <end position="1547"/>
    </location>
</feature>
<feature type="helix" evidence="40">
    <location>
        <begin position="1548"/>
        <end position="1550"/>
    </location>
</feature>
<feature type="strand" evidence="37">
    <location>
        <begin position="1554"/>
        <end position="1567"/>
    </location>
</feature>
<feature type="strand" evidence="37">
    <location>
        <begin position="1569"/>
        <end position="1571"/>
    </location>
</feature>
<feature type="strand" evidence="37">
    <location>
        <begin position="1581"/>
        <end position="1589"/>
    </location>
</feature>
<gene>
    <name evidence="32" type="primary">RB1CC1</name>
    <name type="synonym">KIAA0203</name>
    <name type="synonym">RBICC</name>
</gene>
<proteinExistence type="evidence at protein level"/>
<sequence length="1594" mass="183091">MKLYVFLVNTGTTLTFDTELTVQTVADLKHAIQSKYKIAIQHQVLVVNGGECMAADRRVCTYSAGTDTNPIFLFNKEMILCDRPPAIPKTTFSTENDMEIKVEESLMMPAVFHTVASRTQLALEMYEVAKKLCSFCEGLVHDEHLQHQGWAAIMANLEDCSNSYQKLLFKFESIYSNYLQSIEDIKLKLTHLGTAVSVMAKIPLLECLTRHSYRECLGRLDSLPEHEDSEKAEMKRSTELVLSPDMPRTTNESLLTSFPKSVEHVSPDTADAESGKEIRESCQSTVHQQDETTIDTKDGDLPFFNVSLLDWINVQDRPNDVESLVRKCFDSMSRLDPRIIRPFIAECRQTIAKLDNQNMKAIKGLEDRLYALDQMIASCGRLVNEQKELAQGFLANQKRAENLKDASVLPDLCLSHANQLMIMLQNHRKLLDIKQKCTTAKQELANNLHVRLKWCCFVMLHADQDGEKLQALLRLVIELLERVKIVEALSTVPQMYCLAVVEVVRRKMFIKHYREWAGALVKDGKRLYEAEKSKRESFGKLFRKSFLRNRLFRGLDSWPPSFCTQKPRKFDCELPDISLKDLQFLQSFCPSEVQPFLRVPLLCDFEPLHQHVLALHNLVKAAQSLDEMSQTITDLLSEQKASVSQTSPQSASSPRMESTAGITTTTSPRTPPPLTVQDPLCPAVCPLEELSPDSIDAHTFDFETIPHPNIEQTIHQVSLDLDSLAESPESDFMSAVNEFVIEENLSSPNPISDPQSPEMMVESLYSSVINAIDSRRMQDTNVCGKEDFGDHTSLNVQLERCRVVAQDSHFSIQTIKEDLCHFRTFVQKEQCDFSNSLKCTAVEIRNIIEKVKCSLEITLKEKHQKELLSLKNEYEGKLDGLIKETEENENKIKKLKGELVCLEEVLQNKDNEFALVKHEKEAVICLQNEKDQKLLEMENIMHSQNCEIKELKQSREIVLEDLKKLHVENDEKLQLLRAELQSLEQSHLKELEDTLQVRHIQEFEKVMTDHRVSLEELKKENQQIINQIQESHAEIIQEKEKQLQELKLKVSDLSDTRCKLEVELALKEAETDEIKILLEESRAQQKETLKSLLEQETENLRTEISKLNQKIQDNNENYQVGLAELRTLMTIEKDQCISELISRHEEESNILKAELNKVTSLHNQAFEIEKNLKEQIIELQSKLDSELSALERQKDEKITQQEEKYEAIIQNLEKDRQKLVSSQEQDREQLIQKLNCEKDEAIQTALKEFKLEREVVEKELLEKVKHLENQIAKSPAIDSTRGDSSSLVAELQEKLQEEKAKFLEQLEEQEKRKNEEMQNVRTSLIAEQQTNFNTVLTREKMRKENIINDLSDKLKSTMQQQERDKDLIESLSEDRARLLEEKKKLEEEVSKLRSSSFVPSPYVATAPELYGACAPELPGESDRSAVETADEGRVDSAMETSMMSVQENIHMLSEEKQRIMLLERTLQLKEEENKRLNQRLMSQSMSSVSSRHSEKIAIRDFQVGDLVLIILDERHDNYVLFTVSPTLYFLHSESLPALDLKPGEGASGASRRPWVLGKVMEKEYCQAKKAQNRFKVPLGTKFYRVKAVSWNKKV</sequence>
<comment type="function">
    <text evidence="1 4 6 7 8 9 14 18">Involved in autophagy (PubMed:21775823). Regulates early events but also late events of autophagosome formation through direct interaction with Atg16L1 (PubMed:23392225). Required for the formation of the autophagosome-like double-membrane structure that surrounds the Salmonella-containing vacuole (SCV) during S.typhimurium infection and subsequent xenophagy (By similarity). Involved in repair of DNA damage caused by ionizing radiation, which subsequently improves cell survival by decreasing apoptosis (By similarity). Inhibits PTK2/FAK1 and PTK2B/PYK2 kinase activity, affecting their downstream signaling pathways (PubMed:10769033, PubMed:12221124). Plays a role as a modulator of TGF-beta-signaling by restricting substrate specificity of RNF111 (By similarity). Functions as a DNA-binding transcription factor (PubMed:12095676). Is a potent regulator of the RB1 pathway through induction of RB1 expression (PubMed:14533007). Plays a crucial role in muscular differentiation (PubMed:12163359). Plays an indispensable role in fetal hematopoiesis and in the regulation of neuronal homeostasis (By similarity).</text>
</comment>
<comment type="subunit">
    <text evidence="1 4 8 12 13 14 15 16 17 18 19 20 21 22 23 24 25 26">Part of a complex consisting of ATG13/KIAA0652, ULK1 and RB1CC1 (PubMed:19211835, PubMed:19597335). This complex associates with ATG101 (PubMed:19211835, PubMed:19597335). Interacts with PTK2/FAK1 and PTK2B/PYK2 (PubMed:10769033, PubMed:12221124). Interacts with GABARAP and GABARAPL1 (PubMed:23043107). Interacts with ATG16L1; the interaction is required for ULK1 complex-dependent autophagy (PubMed:23262492, PubMed:23392225, PubMed:24954904, PubMed:28890335). Interacts with RNF111, SKI and SMAD7 (By similarity). Interacts with COP1 in the cytoplasm of proliferating cells in response to UV stimulation (PubMed:23289756). Interacts with TP53 (PubMed:21775823). Interacts with C9orf72 (PubMed:27334615). Interacts with WDR45B (PubMed:28561066). Interacts with ATG13; this interaction is increased in the absence of TMEM39A (PubMed:31806350). Interacts with WIPI2 (PubMed:28890335). Interacts with TAX1BP1 (PubMed:33226137, PubMed:34471133). Interacts (via phosphorylated FFAT motif) with MOSPD2, VAPA and VAPB (PubMed:33124732).</text>
</comment>
<comment type="interaction">
    <interactant intactId="EBI-1047793">
        <id>Q8TDY2</id>
    </interactant>
    <interactant intactId="EBI-2946739">
        <id>Q9BSB4</id>
        <label>ATG101</label>
    </interactant>
    <organismsDiffer>false</organismsDiffer>
    <experiments>11</experiments>
</comment>
<comment type="interaction">
    <interactant intactId="EBI-1047793">
        <id>Q8TDY2</id>
    </interactant>
    <interactant intactId="EBI-2798775">
        <id>O75143</id>
        <label>ATG13</label>
    </interactant>
    <organismsDiffer>false</organismsDiffer>
    <experiments>11</experiments>
</comment>
<comment type="interaction">
    <interactant intactId="EBI-1047793">
        <id>Q8TDY2</id>
    </interactant>
    <interactant intactId="EBI-535909">
        <id>Q676U5</id>
        <label>ATG16L1</label>
    </interactant>
    <organismsDiffer>false</organismsDiffer>
    <experiments>6</experiments>
</comment>
<comment type="interaction">
    <interactant intactId="EBI-1047793">
        <id>Q8TDY2</id>
    </interactant>
    <interactant intactId="EBI-1047414">
        <id>Q9H1Y0</id>
        <label>ATG5</label>
    </interactant>
    <organismsDiffer>false</organismsDiffer>
    <experiments>3</experiments>
</comment>
<comment type="interaction">
    <interactant intactId="EBI-1047793">
        <id>Q8TDY2</id>
    </interactant>
    <interactant intactId="EBI-16693635">
        <id>Q96LT7-1</id>
        <label>C9orf72</label>
    </interactant>
    <organismsDiffer>false</organismsDiffer>
    <experiments>7</experiments>
</comment>
<comment type="interaction">
    <interactant intactId="EBI-1047793">
        <id>Q8TDY2</id>
    </interactant>
    <interactant intactId="EBI-16693673">
        <id>Q96LT7-2</id>
        <label>C9orf72</label>
    </interactant>
    <organismsDiffer>false</organismsDiffer>
    <experiments>6</experiments>
</comment>
<comment type="interaction">
    <interactant intactId="EBI-1047793">
        <id>Q8TDY2</id>
    </interactant>
    <interactant intactId="EBI-359969">
        <id>A7MCY6</id>
        <label>TBKBP1</label>
    </interactant>
    <organismsDiffer>false</organismsDiffer>
    <experiments>2</experiments>
</comment>
<comment type="interaction">
    <interactant intactId="EBI-1047793">
        <id>Q8TDY2</id>
    </interactant>
    <interactant intactId="EBI-908831">
        <id>O75385</id>
        <label>ULK1</label>
    </interactant>
    <organismsDiffer>false</organismsDiffer>
    <experiments>13</experiments>
</comment>
<comment type="interaction">
    <interactant intactId="EBI-1047793">
        <id>Q8TDY2</id>
    </interactant>
    <interactant intactId="EBI-16029274">
        <id>Q8C0J2-3</id>
        <label>Atg16l1</label>
    </interactant>
    <organismsDiffer>true</organismsDiffer>
    <experiments>6</experiments>
</comment>
<comment type="subcellular location">
    <subcellularLocation>
        <location evidence="5">Nucleus</location>
    </subcellularLocation>
    <subcellularLocation>
        <location evidence="4">Cytoplasm</location>
    </subcellularLocation>
    <subcellularLocation>
        <location evidence="1">Cytoplasm</location>
        <location evidence="1">Cytosol</location>
    </subcellularLocation>
    <subcellularLocation>
        <location evidence="21">Preautophagosomal structure</location>
    </subcellularLocation>
    <subcellularLocation>
        <location evidence="21">Lysosome</location>
    </subcellularLocation>
    <text evidence="21 22">Under starvation conditions, is localized to puncate structures primarily representing the isolation membrane that sequesters a portion of the cytoplasm resulting in the formation of an autophagosome.</text>
</comment>
<comment type="alternative products">
    <event type="alternative splicing"/>
    <isoform>
        <id>Q8TDY2-1</id>
        <name>1</name>
        <sequence type="displayed"/>
    </isoform>
    <isoform>
        <id>Q8TDY2-2</id>
        <name>2</name>
        <sequence type="described" ref="VSP_040097"/>
    </isoform>
</comment>
<comment type="tissue specificity">
    <text evidence="5 7">Expression levels correlated closely with those of RB1 in cancer cell lines as well as in various normal human tissues. Abundantly expressed in human musculoskeletal and cultured osteosarcoma cells.</text>
</comment>
<comment type="developmental stage">
    <text evidence="7">Expression was difficult to detect in immature proliferating chondroblasts or myogenic cells in embryos, but became obvious and prominent concomitantly with the maturation of osteocytes, chondrocytes, and skeletal muscle cells. Expression in these musculoskeletal cells increased with RB1 expression, which is linked to the terminal differentiation of many tissues and cells. The introduction of the wild-type protein decreased the formation of macroscopic colonies in a cell growth assay.</text>
</comment>
<comment type="domain">
    <text evidence="24">The FFAT motif is involved in the interaction with MOSPD2, VAPA and VAPB and its phosphorylation regulates these interactions.</text>
</comment>
<comment type="PTM">
    <text evidence="24">Phosphorylation at Ser-734 of the FFAT motif activates interaction with MOSPD2, VAPA and VAPB.</text>
</comment>
<comment type="miscellaneous">
    <text>Probably involved in the tumorigenesis of breast cancer. RB1CC1 is frequently mutated in breast cancer and shows characteristics of a classical tumor suppressor gene.</text>
</comment>
<comment type="similarity">
    <text evidence="30">Belongs to the ATG17 family.</text>
</comment>
<comment type="sequence caution" evidence="30">
    <conflict type="erroneous initiation">
        <sequence resource="EMBL-CDS" id="BAA13194"/>
    </conflict>
    <text>Extended N-terminus.</text>
</comment>
<dbReference type="EMBL" id="AB059622">
    <property type="protein sequence ID" value="BAB69690.1"/>
    <property type="molecule type" value="mRNA"/>
</dbReference>
<dbReference type="EMBL" id="D86958">
    <property type="protein sequence ID" value="BAA13194.2"/>
    <property type="status" value="ALT_INIT"/>
    <property type="molecule type" value="mRNA"/>
</dbReference>
<dbReference type="EMBL" id="AC090814">
    <property type="status" value="NOT_ANNOTATED_CDS"/>
    <property type="molecule type" value="Genomic_DNA"/>
</dbReference>
<dbReference type="EMBL" id="AC113139">
    <property type="status" value="NOT_ANNOTATED_CDS"/>
    <property type="molecule type" value="Genomic_DNA"/>
</dbReference>
<dbReference type="EMBL" id="BC017556">
    <property type="protein sequence ID" value="AAH17556.1"/>
    <property type="molecule type" value="mRNA"/>
</dbReference>
<dbReference type="EMBL" id="AY173931">
    <property type="protein sequence ID" value="AAO17545.1"/>
    <property type="molecule type" value="mRNA"/>
</dbReference>
<dbReference type="CCDS" id="CCDS34892.1">
    <molecule id="Q8TDY2-1"/>
</dbReference>
<dbReference type="CCDS" id="CCDS47856.1">
    <molecule id="Q8TDY2-2"/>
</dbReference>
<dbReference type="RefSeq" id="NP_001077086.1">
    <molecule id="Q8TDY2-2"/>
    <property type="nucleotide sequence ID" value="NM_001083617.2"/>
</dbReference>
<dbReference type="RefSeq" id="NP_055596.3">
    <molecule id="Q8TDY2-1"/>
    <property type="nucleotide sequence ID" value="NM_014781.4"/>
</dbReference>
<dbReference type="RefSeq" id="XP_011515945.1">
    <molecule id="Q8TDY2-1"/>
    <property type="nucleotide sequence ID" value="XM_011517643.2"/>
</dbReference>
<dbReference type="RefSeq" id="XP_016869596.1">
    <molecule id="Q8TDY2-2"/>
    <property type="nucleotide sequence ID" value="XM_017014107.3"/>
</dbReference>
<dbReference type="PDB" id="6DCE">
    <property type="method" value="X-ray"/>
    <property type="resolution" value="1.56 A"/>
    <property type="chains" value="A=1494-1594"/>
</dbReference>
<dbReference type="PDB" id="6GMA">
    <property type="method" value="X-ray"/>
    <property type="resolution" value="3.20 A"/>
    <property type="chains" value="A/B/C/D/E/F=1458-1594"/>
</dbReference>
<dbReference type="PDB" id="7CZG">
    <property type="method" value="X-ray"/>
    <property type="resolution" value="1.80 A"/>
    <property type="chains" value="A/B/C/D=1490-1594"/>
</dbReference>
<dbReference type="PDB" id="7CZM">
    <property type="method" value="X-ray"/>
    <property type="resolution" value="2.00 A"/>
    <property type="chains" value="A/B=1490-1594"/>
</dbReference>
<dbReference type="PDB" id="7D0E">
    <property type="method" value="X-ray"/>
    <property type="resolution" value="1.40 A"/>
    <property type="chains" value="A=1490-1594"/>
</dbReference>
<dbReference type="PDB" id="7EA2">
    <property type="method" value="X-ray"/>
    <property type="resolution" value="2.14 A"/>
    <property type="chains" value="A/B=1490-1594"/>
</dbReference>
<dbReference type="PDB" id="7EAA">
    <property type="method" value="X-ray"/>
    <property type="resolution" value="2.60 A"/>
    <property type="chains" value="C/D=1286-1395"/>
</dbReference>
<dbReference type="PDB" id="8SOI">
    <property type="method" value="EM"/>
    <property type="resolution" value="4.20 A"/>
    <property type="chains" value="A/B=1-600"/>
</dbReference>
<dbReference type="PDB" id="8SQZ">
    <property type="method" value="EM"/>
    <property type="resolution" value="5.85 A"/>
    <property type="chains" value="A/B=1-640"/>
</dbReference>
<dbReference type="PDB" id="8SRM">
    <property type="method" value="EM"/>
    <property type="resolution" value="4.46 A"/>
    <property type="chains" value="A/B=1-640"/>
</dbReference>
<dbReference type="PDB" id="8W6B">
    <property type="method" value="X-ray"/>
    <property type="resolution" value="2.39 A"/>
    <property type="chains" value="C/D/G/H=1343-1395"/>
</dbReference>
<dbReference type="PDB" id="8YFK">
    <property type="method" value="X-ray"/>
    <property type="resolution" value="2.00 A"/>
    <property type="chains" value="A/C/E/G=1490-1594"/>
</dbReference>
<dbReference type="PDB" id="8YFL">
    <property type="method" value="X-ray"/>
    <property type="resolution" value="1.50 A"/>
    <property type="chains" value="A/C=1490-1594"/>
</dbReference>
<dbReference type="PDB" id="8YFM">
    <property type="method" value="X-ray"/>
    <property type="resolution" value="1.50 A"/>
    <property type="chains" value="A/D=1490-1594"/>
</dbReference>
<dbReference type="PDB" id="8YFN">
    <property type="method" value="X-ray"/>
    <property type="resolution" value="2.30 A"/>
    <property type="chains" value="A/C=1490-1594"/>
</dbReference>
<dbReference type="PDB" id="9C82">
    <property type="method" value="EM"/>
    <property type="resolution" value="6.84 A"/>
    <property type="chains" value="F=1-640"/>
</dbReference>
<dbReference type="PDB" id="9D34">
    <property type="method" value="X-ray"/>
    <property type="resolution" value="1.42 A"/>
    <property type="chains" value="A=1490-1594"/>
</dbReference>
<dbReference type="PDBsum" id="6DCE"/>
<dbReference type="PDBsum" id="6GMA"/>
<dbReference type="PDBsum" id="7CZG"/>
<dbReference type="PDBsum" id="7CZM"/>
<dbReference type="PDBsum" id="7D0E"/>
<dbReference type="PDBsum" id="7EA2"/>
<dbReference type="PDBsum" id="7EAA"/>
<dbReference type="PDBsum" id="8SOI"/>
<dbReference type="PDBsum" id="8SQZ"/>
<dbReference type="PDBsum" id="8SRM"/>
<dbReference type="PDBsum" id="8W6B"/>
<dbReference type="PDBsum" id="8YFK"/>
<dbReference type="PDBsum" id="8YFL"/>
<dbReference type="PDBsum" id="8YFM"/>
<dbReference type="PDBsum" id="8YFN"/>
<dbReference type="PDBsum" id="9C82"/>
<dbReference type="PDBsum" id="9D34"/>
<dbReference type="EMDB" id="EMD-40658"/>
<dbReference type="EMDB" id="EMD-40715"/>
<dbReference type="EMDB" id="EMD-40735"/>
<dbReference type="EMDB" id="EMD-40738"/>
<dbReference type="EMDB" id="EMD-45297"/>
<dbReference type="SMR" id="Q8TDY2"/>
<dbReference type="BioGRID" id="115160">
    <property type="interactions" value="357"/>
</dbReference>
<dbReference type="ComplexPortal" id="CPX-373">
    <property type="entry name" value="ULK1-ATG13-RB1CC1-ATG101 autophagy initiation complex"/>
</dbReference>
<dbReference type="CORUM" id="Q8TDY2"/>
<dbReference type="DIP" id="DIP-45969N"/>
<dbReference type="FunCoup" id="Q8TDY2">
    <property type="interactions" value="3028"/>
</dbReference>
<dbReference type="IntAct" id="Q8TDY2">
    <property type="interactions" value="186"/>
</dbReference>
<dbReference type="MINT" id="Q8TDY2"/>
<dbReference type="STRING" id="9606.ENSP00000025008"/>
<dbReference type="GlyGen" id="Q8TDY2">
    <property type="glycosylation" value="1 site, 1 O-linked glycan (1 site)"/>
</dbReference>
<dbReference type="iPTMnet" id="Q8TDY2"/>
<dbReference type="MetOSite" id="Q8TDY2"/>
<dbReference type="PhosphoSitePlus" id="Q8TDY2"/>
<dbReference type="BioMuta" id="RB1CC1"/>
<dbReference type="DMDM" id="160359050"/>
<dbReference type="jPOST" id="Q8TDY2"/>
<dbReference type="MassIVE" id="Q8TDY2"/>
<dbReference type="PaxDb" id="9606-ENSP00000025008"/>
<dbReference type="PeptideAtlas" id="Q8TDY2"/>
<dbReference type="ProteomicsDB" id="74368">
    <molecule id="Q8TDY2-1"/>
</dbReference>
<dbReference type="ProteomicsDB" id="74369">
    <molecule id="Q8TDY2-2"/>
</dbReference>
<dbReference type="Pumba" id="Q8TDY2"/>
<dbReference type="Antibodypedia" id="24432">
    <property type="antibodies" value="307 antibodies from 30 providers"/>
</dbReference>
<dbReference type="DNASU" id="9821"/>
<dbReference type="Ensembl" id="ENST00000025008.10">
    <molecule id="Q8TDY2-1"/>
    <property type="protein sequence ID" value="ENSP00000025008.5"/>
    <property type="gene ID" value="ENSG00000023287.13"/>
</dbReference>
<dbReference type="Ensembl" id="ENST00000435644.6">
    <molecule id="Q8TDY2-2"/>
    <property type="protein sequence ID" value="ENSP00000396067.2"/>
    <property type="gene ID" value="ENSG00000023287.13"/>
</dbReference>
<dbReference type="GeneID" id="9821"/>
<dbReference type="KEGG" id="hsa:9821"/>
<dbReference type="MANE-Select" id="ENST00000025008.10">
    <property type="protein sequence ID" value="ENSP00000025008.5"/>
    <property type="RefSeq nucleotide sequence ID" value="NM_014781.5"/>
    <property type="RefSeq protein sequence ID" value="NP_055596.3"/>
</dbReference>
<dbReference type="UCSC" id="uc003xre.5">
    <molecule id="Q8TDY2-1"/>
    <property type="organism name" value="human"/>
</dbReference>
<dbReference type="AGR" id="HGNC:15574"/>
<dbReference type="CTD" id="9821"/>
<dbReference type="DisGeNET" id="9821"/>
<dbReference type="GeneCards" id="RB1CC1"/>
<dbReference type="HGNC" id="HGNC:15574">
    <property type="gene designation" value="RB1CC1"/>
</dbReference>
<dbReference type="HPA" id="ENSG00000023287">
    <property type="expression patterns" value="Low tissue specificity"/>
</dbReference>
<dbReference type="MalaCards" id="RB1CC1"/>
<dbReference type="MIM" id="606837">
    <property type="type" value="gene"/>
</dbReference>
<dbReference type="neXtProt" id="NX_Q8TDY2"/>
<dbReference type="OpenTargets" id="ENSG00000023287"/>
<dbReference type="PharmGKB" id="PA34248"/>
<dbReference type="VEuPathDB" id="HostDB:ENSG00000023287"/>
<dbReference type="eggNOG" id="KOG4572">
    <property type="taxonomic scope" value="Eukaryota"/>
</dbReference>
<dbReference type="GeneTree" id="ENSGT00390000015871"/>
<dbReference type="HOGENOM" id="CLU_003711_0_0_1"/>
<dbReference type="InParanoid" id="Q8TDY2"/>
<dbReference type="OMA" id="LMHTQNC"/>
<dbReference type="OrthoDB" id="447953at2759"/>
<dbReference type="PAN-GO" id="Q8TDY2">
    <property type="GO annotations" value="12 GO annotations based on evolutionary models"/>
</dbReference>
<dbReference type="PhylomeDB" id="Q8TDY2"/>
<dbReference type="TreeFam" id="TF323750"/>
<dbReference type="PathwayCommons" id="Q8TDY2"/>
<dbReference type="Reactome" id="R-HSA-1632852">
    <property type="pathway name" value="Macroautophagy"/>
</dbReference>
<dbReference type="SignaLink" id="Q8TDY2"/>
<dbReference type="SIGNOR" id="Q8TDY2"/>
<dbReference type="BioGRID-ORCS" id="9821">
    <property type="hits" value="113 hits in 1171 CRISPR screens"/>
</dbReference>
<dbReference type="ChiTaRS" id="RB1CC1">
    <property type="organism name" value="human"/>
</dbReference>
<dbReference type="GeneWiki" id="RB1CC1"/>
<dbReference type="GenomeRNAi" id="9821"/>
<dbReference type="Pharos" id="Q8TDY2">
    <property type="development level" value="Tbio"/>
</dbReference>
<dbReference type="PRO" id="PR:Q8TDY2"/>
<dbReference type="Proteomes" id="UP000005640">
    <property type="component" value="Chromosome 8"/>
</dbReference>
<dbReference type="RNAct" id="Q8TDY2">
    <property type="molecule type" value="protein"/>
</dbReference>
<dbReference type="Bgee" id="ENSG00000023287">
    <property type="expression patterns" value="Expressed in buccal mucosa cell and 218 other cell types or tissues"/>
</dbReference>
<dbReference type="ExpressionAtlas" id="Q8TDY2">
    <property type="expression patterns" value="baseline and differential"/>
</dbReference>
<dbReference type="GO" id="GO:1990316">
    <property type="term" value="C:Atg1/ULK1 kinase complex"/>
    <property type="evidence" value="ECO:0000353"/>
    <property type="project" value="UniProtKB"/>
</dbReference>
<dbReference type="GO" id="GO:0000421">
    <property type="term" value="C:autophagosome membrane"/>
    <property type="evidence" value="ECO:0007669"/>
    <property type="project" value="Ensembl"/>
</dbReference>
<dbReference type="GO" id="GO:0005829">
    <property type="term" value="C:cytosol"/>
    <property type="evidence" value="ECO:0000314"/>
    <property type="project" value="HPA"/>
</dbReference>
<dbReference type="GO" id="GO:0005789">
    <property type="term" value="C:endoplasmic reticulum membrane"/>
    <property type="evidence" value="ECO:0000304"/>
    <property type="project" value="Reactome"/>
</dbReference>
<dbReference type="GO" id="GO:0005764">
    <property type="term" value="C:lysosome"/>
    <property type="evidence" value="ECO:0000314"/>
    <property type="project" value="UniProtKB"/>
</dbReference>
<dbReference type="GO" id="GO:0031965">
    <property type="term" value="C:nuclear membrane"/>
    <property type="evidence" value="ECO:0000314"/>
    <property type="project" value="HPA"/>
</dbReference>
<dbReference type="GO" id="GO:0000407">
    <property type="term" value="C:phagophore assembly site"/>
    <property type="evidence" value="ECO:0000314"/>
    <property type="project" value="UniProt"/>
</dbReference>
<dbReference type="GO" id="GO:0034045">
    <property type="term" value="C:phagophore assembly site membrane"/>
    <property type="evidence" value="ECO:0000250"/>
    <property type="project" value="UniProtKB"/>
</dbReference>
<dbReference type="GO" id="GO:0060090">
    <property type="term" value="F:molecular adaptor activity"/>
    <property type="evidence" value="ECO:0000318"/>
    <property type="project" value="GO_Central"/>
</dbReference>
<dbReference type="GO" id="GO:0019901">
    <property type="term" value="F:protein kinase binding"/>
    <property type="evidence" value="ECO:0000314"/>
    <property type="project" value="UniProt"/>
</dbReference>
<dbReference type="GO" id="GO:0043495">
    <property type="term" value="F:protein-membrane adaptor activity"/>
    <property type="evidence" value="ECO:0000314"/>
    <property type="project" value="UniProt"/>
</dbReference>
<dbReference type="GO" id="GO:0000045">
    <property type="term" value="P:autophagosome assembly"/>
    <property type="evidence" value="ECO:0000314"/>
    <property type="project" value="UniProt"/>
</dbReference>
<dbReference type="GO" id="GO:0006914">
    <property type="term" value="P:autophagy"/>
    <property type="evidence" value="ECO:0000250"/>
    <property type="project" value="GO_Central"/>
</dbReference>
<dbReference type="GO" id="GO:0000422">
    <property type="term" value="P:autophagy of mitochondrion"/>
    <property type="evidence" value="ECO:0000318"/>
    <property type="project" value="GO_Central"/>
</dbReference>
<dbReference type="GO" id="GO:0051607">
    <property type="term" value="P:defense response to virus"/>
    <property type="evidence" value="ECO:0007669"/>
    <property type="project" value="Ensembl"/>
</dbReference>
<dbReference type="GO" id="GO:0097191">
    <property type="term" value="P:extrinsic apoptotic signaling pathway"/>
    <property type="evidence" value="ECO:0007669"/>
    <property type="project" value="Ensembl"/>
</dbReference>
<dbReference type="GO" id="GO:0061723">
    <property type="term" value="P:glycophagy"/>
    <property type="evidence" value="ECO:0000318"/>
    <property type="project" value="GO_Central"/>
</dbReference>
<dbReference type="GO" id="GO:0007507">
    <property type="term" value="P:heart development"/>
    <property type="evidence" value="ECO:0007669"/>
    <property type="project" value="Ensembl"/>
</dbReference>
<dbReference type="GO" id="GO:0045087">
    <property type="term" value="P:innate immune response"/>
    <property type="evidence" value="ECO:0007669"/>
    <property type="project" value="Ensembl"/>
</dbReference>
<dbReference type="GO" id="GO:0001889">
    <property type="term" value="P:liver development"/>
    <property type="evidence" value="ECO:0007669"/>
    <property type="project" value="Ensembl"/>
</dbReference>
<dbReference type="GO" id="GO:0008285">
    <property type="term" value="P:negative regulation of cell population proliferation"/>
    <property type="evidence" value="ECO:0000314"/>
    <property type="project" value="ComplexPortal"/>
</dbReference>
<dbReference type="GO" id="GO:2001237">
    <property type="term" value="P:negative regulation of extrinsic apoptotic signaling pathway"/>
    <property type="evidence" value="ECO:0007669"/>
    <property type="project" value="Ensembl"/>
</dbReference>
<dbReference type="GO" id="GO:0000425">
    <property type="term" value="P:pexophagy"/>
    <property type="evidence" value="ECO:0000318"/>
    <property type="project" value="GO_Central"/>
</dbReference>
<dbReference type="GO" id="GO:0034727">
    <property type="term" value="P:piecemeal microautophagy of the nucleus"/>
    <property type="evidence" value="ECO:0000318"/>
    <property type="project" value="GO_Central"/>
</dbReference>
<dbReference type="GO" id="GO:0010508">
    <property type="term" value="P:positive regulation of autophagy"/>
    <property type="evidence" value="ECO:0000266"/>
    <property type="project" value="ComplexPortal"/>
</dbReference>
<dbReference type="GO" id="GO:0045793">
    <property type="term" value="P:positive regulation of cell size"/>
    <property type="evidence" value="ECO:0007669"/>
    <property type="project" value="Ensembl"/>
</dbReference>
<dbReference type="GO" id="GO:0046330">
    <property type="term" value="P:positive regulation of JNK cascade"/>
    <property type="evidence" value="ECO:0007669"/>
    <property type="project" value="Ensembl"/>
</dbReference>
<dbReference type="GO" id="GO:0061709">
    <property type="term" value="P:reticulophagy"/>
    <property type="evidence" value="ECO:0000318"/>
    <property type="project" value="GO_Central"/>
</dbReference>
<dbReference type="GO" id="GO:0034517">
    <property type="term" value="P:ribophagy"/>
    <property type="evidence" value="ECO:0000318"/>
    <property type="project" value="GO_Central"/>
</dbReference>
<dbReference type="CDD" id="cd17060">
    <property type="entry name" value="Ubl_RB1CC1"/>
    <property type="match status" value="1"/>
</dbReference>
<dbReference type="FunFam" id="3.10.20.90:FF:000049">
    <property type="entry name" value="RB1-inducible coiled-coil protein 1 isoform X1"/>
    <property type="match status" value="1"/>
</dbReference>
<dbReference type="Gene3D" id="3.10.20.90">
    <property type="entry name" value="Phosphatidylinositol 3-kinase Catalytic Subunit, Chain A, domain 1"/>
    <property type="match status" value="1"/>
</dbReference>
<dbReference type="InterPro" id="IPR040040">
    <property type="entry name" value="ATG11"/>
</dbReference>
<dbReference type="InterPro" id="IPR019460">
    <property type="entry name" value="Atg11_C"/>
</dbReference>
<dbReference type="PANTHER" id="PTHR13222">
    <property type="entry name" value="RB1-INDUCIBLE COILED-COIL"/>
    <property type="match status" value="1"/>
</dbReference>
<dbReference type="PANTHER" id="PTHR13222:SF1">
    <property type="entry name" value="RB1-INDUCIBLE COILED-COIL PROTEIN 1"/>
    <property type="match status" value="1"/>
</dbReference>
<dbReference type="Pfam" id="PF10377">
    <property type="entry name" value="ATG11"/>
    <property type="match status" value="1"/>
</dbReference>
<reference key="1">
    <citation type="journal article" date="2002" name="Oncogene">
        <title>Identification of RB1CC1, a novel human gene that can induce RB1 in various human cells.</title>
        <authorList>
            <person name="Chano T."/>
            <person name="Ikegawa S."/>
            <person name="Kontani K."/>
            <person name="Okabe H."/>
            <person name="Baldini N."/>
            <person name="Saeki Y."/>
        </authorList>
    </citation>
    <scope>NUCLEOTIDE SEQUENCE [MRNA] (ISOFORM 1)</scope>
    <scope>VARIANT THR-234</scope>
    <scope>SUBCELLULAR LOCATION</scope>
    <scope>TISSUE SPECIFICITY</scope>
    <scope>INDUCTION</scope>
    <scope>INDUCTION OF RB1 EXPRESSION</scope>
    <source>
        <tissue>Osteosarcoma</tissue>
    </source>
</reference>
<reference key="2">
    <citation type="journal article" date="1996" name="DNA Res.">
        <title>Prediction of the coding sequences of unidentified human genes. VI. The coding sequences of 80 new genes (KIAA0201-KIAA0280) deduced by analysis of cDNA clones from cell line KG-1 and brain.</title>
        <authorList>
            <person name="Nagase T."/>
            <person name="Seki N."/>
            <person name="Ishikawa K."/>
            <person name="Ohira M."/>
            <person name="Kawarabayasi Y."/>
            <person name="Ohara O."/>
            <person name="Tanaka A."/>
            <person name="Kotani H."/>
            <person name="Miyajima N."/>
            <person name="Nomura N."/>
        </authorList>
    </citation>
    <scope>NUCLEOTIDE SEQUENCE [LARGE SCALE MRNA] (ISOFORM 2)</scope>
    <scope>VARIANT THR-234</scope>
    <source>
        <tissue>Myeloid</tissue>
    </source>
</reference>
<reference key="3">
    <citation type="submission" date="2004-01" db="EMBL/GenBank/DDBJ databases">
        <authorList>
            <person name="Nagase T."/>
            <person name="Seki N."/>
            <person name="Ishikawa K."/>
            <person name="Ohira M."/>
            <person name="Kawarabayasi Y."/>
            <person name="Ohara O."/>
            <person name="Tanaka A."/>
            <person name="Kotani H."/>
            <person name="Miyajima N."/>
            <person name="Nomura N."/>
        </authorList>
    </citation>
    <scope>SEQUENCE REVISION</scope>
</reference>
<reference key="4">
    <citation type="journal article" date="2006" name="Nature">
        <title>DNA sequence and analysis of human chromosome 8.</title>
        <authorList>
            <person name="Nusbaum C."/>
            <person name="Mikkelsen T.S."/>
            <person name="Zody M.C."/>
            <person name="Asakawa S."/>
            <person name="Taudien S."/>
            <person name="Garber M."/>
            <person name="Kodira C.D."/>
            <person name="Schueler M.G."/>
            <person name="Shimizu A."/>
            <person name="Whittaker C.A."/>
            <person name="Chang J.L."/>
            <person name="Cuomo C.A."/>
            <person name="Dewar K."/>
            <person name="FitzGerald M.G."/>
            <person name="Yang X."/>
            <person name="Allen N.R."/>
            <person name="Anderson S."/>
            <person name="Asakawa T."/>
            <person name="Blechschmidt K."/>
            <person name="Bloom T."/>
            <person name="Borowsky M.L."/>
            <person name="Butler J."/>
            <person name="Cook A."/>
            <person name="Corum B."/>
            <person name="DeArellano K."/>
            <person name="DeCaprio D."/>
            <person name="Dooley K.T."/>
            <person name="Dorris L. III"/>
            <person name="Engels R."/>
            <person name="Gloeckner G."/>
            <person name="Hafez N."/>
            <person name="Hagopian D.S."/>
            <person name="Hall J.L."/>
            <person name="Ishikawa S.K."/>
            <person name="Jaffe D.B."/>
            <person name="Kamat A."/>
            <person name="Kudoh J."/>
            <person name="Lehmann R."/>
            <person name="Lokitsang T."/>
            <person name="Macdonald P."/>
            <person name="Major J.E."/>
            <person name="Matthews C.D."/>
            <person name="Mauceli E."/>
            <person name="Menzel U."/>
            <person name="Mihalev A.H."/>
            <person name="Minoshima S."/>
            <person name="Murayama Y."/>
            <person name="Naylor J.W."/>
            <person name="Nicol R."/>
            <person name="Nguyen C."/>
            <person name="O'Leary S.B."/>
            <person name="O'Neill K."/>
            <person name="Parker S.C.J."/>
            <person name="Polley A."/>
            <person name="Raymond C.K."/>
            <person name="Reichwald K."/>
            <person name="Rodriguez J."/>
            <person name="Sasaki T."/>
            <person name="Schilhabel M."/>
            <person name="Siddiqui R."/>
            <person name="Smith C.L."/>
            <person name="Sneddon T.P."/>
            <person name="Talamas J.A."/>
            <person name="Tenzin P."/>
            <person name="Topham K."/>
            <person name="Venkataraman V."/>
            <person name="Wen G."/>
            <person name="Yamazaki S."/>
            <person name="Young S.K."/>
            <person name="Zeng Q."/>
            <person name="Zimmer A.R."/>
            <person name="Rosenthal A."/>
            <person name="Birren B.W."/>
            <person name="Platzer M."/>
            <person name="Shimizu N."/>
            <person name="Lander E.S."/>
        </authorList>
    </citation>
    <scope>NUCLEOTIDE SEQUENCE [LARGE SCALE GENOMIC DNA]</scope>
</reference>
<reference key="5">
    <citation type="journal article" date="2004" name="Genome Res.">
        <title>The status, quality, and expansion of the NIH full-length cDNA project: the Mammalian Gene Collection (MGC).</title>
        <authorList>
            <consortium name="The MGC Project Team"/>
        </authorList>
    </citation>
    <scope>NUCLEOTIDE SEQUENCE [LARGE SCALE MRNA] (ISOFORM 1)</scope>
    <scope>VARIANT THR-234</scope>
    <source>
        <tissue>Uterus</tissue>
    </source>
</reference>
<reference key="6">
    <citation type="journal article" date="2000" name="J. Cell Biol.">
        <title>Suppression of Pyk2 kinase and cellular activities by FIP200.</title>
        <authorList>
            <person name="Ueda H."/>
            <person name="Abbi S."/>
            <person name="Zheng C."/>
            <person name="Guan J.-L."/>
        </authorList>
    </citation>
    <scope>NUCLEOTIDE SEQUENCE [MRNA] OF 1377-1594</scope>
    <scope>FUNCTION</scope>
    <scope>SUBCELLULAR LOCATION</scope>
    <scope>INTERACTION WITH PTK2/FAK1 AND PTK2B/PYK2</scope>
</reference>
<reference key="7">
    <citation type="journal article" date="2002" name="Am. J. Pathol.">
        <title>Preferential expression of RB1-inducible coiled-coil 1 in terminal differentiated musculoskeletal cells.</title>
        <authorList>
            <person name="Chano T."/>
            <person name="Saeki Y."/>
            <person name="Serra M."/>
            <person name="Matsumoto K."/>
            <person name="Okabe H."/>
        </authorList>
    </citation>
    <scope>TISSUE SPECIFICITY</scope>
    <scope>DEVELOPMENTAL STAGE</scope>
    <scope>FUNCTION</scope>
</reference>
<reference key="8">
    <citation type="journal article" date="2002" name="Gene">
        <title>Isolation, characterization and mapping of the mouse and human RB1CC1 genes.</title>
        <authorList>
            <person name="Chano T."/>
            <person name="Ikegawa S."/>
            <person name="Saito-Ohara F."/>
            <person name="Inazawa J."/>
            <person name="Mabuchi A."/>
            <person name="Saeki Y."/>
            <person name="Okabe H."/>
        </authorList>
    </citation>
    <scope>CHARACTERIZATION</scope>
    <scope>FUNCTION</scope>
</reference>
<reference key="9">
    <citation type="journal article" date="2002" name="Mol. Biol. Cell">
        <title>Regulation of focal adhesion kinase by a novel protein inhibitor FIP200.</title>
        <authorList>
            <person name="Abbi S."/>
            <person name="Ueda H."/>
            <person name="Zheng C."/>
            <person name="Cooper L.A."/>
            <person name="Zhao J."/>
            <person name="Christopher R."/>
            <person name="Guan J.L."/>
        </authorList>
    </citation>
    <scope>FUNCTION</scope>
    <scope>INTERACTION WITH PTK2/FAK1</scope>
</reference>
<reference key="10">
    <citation type="journal article" date="2002" name="Nat. Genet.">
        <title>Truncating mutations of RB1CC1 in human breast cancer.</title>
        <authorList>
            <person name="Chano T."/>
            <person name="Kontani K."/>
            <person name="Teramoto K."/>
            <person name="Okabe H."/>
            <person name="Ikegawa S."/>
        </authorList>
    </citation>
    <scope>INVOLVEMENT IN BREAST CANCER</scope>
</reference>
<reference key="11">
    <citation type="journal article" date="2003" name="Int. J. Mol. Med.">
        <title>RB1CC1 suppresses cell cycle progression through RB1 expression in human neoplastic cells.</title>
        <authorList>
            <person name="Kontani K."/>
            <person name="Chano T."/>
            <person name="Ozaki Y."/>
            <person name="Tezuka N."/>
            <person name="Sawai S."/>
            <person name="Fujino S."/>
            <person name="Saeki Y."/>
            <person name="Okabe H."/>
        </authorList>
    </citation>
    <scope>FUNCTION</scope>
</reference>
<reference key="12">
    <citation type="journal article" date="2006" name="Cell">
        <title>Global, in vivo, and site-specific phosphorylation dynamics in signaling networks.</title>
        <authorList>
            <person name="Olsen J.V."/>
            <person name="Blagoev B."/>
            <person name="Gnad F."/>
            <person name="Macek B."/>
            <person name="Kumar C."/>
            <person name="Mortensen P."/>
            <person name="Mann M."/>
        </authorList>
    </citation>
    <scope>IDENTIFICATION BY MASS SPECTROMETRY [LARGE SCALE ANALYSIS]</scope>
    <source>
        <tissue>Cervix carcinoma</tissue>
    </source>
</reference>
<reference key="13">
    <citation type="journal article" date="2008" name="Proc. Natl. Acad. Sci. U.S.A.">
        <title>A quantitative atlas of mitotic phosphorylation.</title>
        <authorList>
            <person name="Dephoure N."/>
            <person name="Zhou C."/>
            <person name="Villen J."/>
            <person name="Beausoleil S.A."/>
            <person name="Bakalarski C.E."/>
            <person name="Elledge S.J."/>
            <person name="Gygi S.P."/>
        </authorList>
    </citation>
    <scope>PHOSPHORYLATION [LARGE SCALE ANALYSIS] AT SER-237; SER-624; SER-647 AND SER-653</scope>
    <scope>IDENTIFICATION BY MASS SPECTROMETRY [LARGE SCALE ANALYSIS]</scope>
    <source>
        <tissue>Cervix carcinoma</tissue>
    </source>
</reference>
<reference key="14">
    <citation type="journal article" date="2009" name="Anal. Chem.">
        <title>Lys-N and trypsin cover complementary parts of the phosphoproteome in a refined SCX-based approach.</title>
        <authorList>
            <person name="Gauci S."/>
            <person name="Helbig A.O."/>
            <person name="Slijper M."/>
            <person name="Krijgsveld J."/>
            <person name="Heck A.J."/>
            <person name="Mohammed S."/>
        </authorList>
    </citation>
    <scope>IDENTIFICATION BY MASS SPECTROMETRY [LARGE SCALE ANALYSIS]</scope>
</reference>
<reference key="15">
    <citation type="journal article" date="2009" name="Autophagy">
        <title>Atg101, a novel mammalian autophagy protein interacting with Atg13.</title>
        <authorList>
            <person name="Hosokawa N."/>
            <person name="Sasaki T."/>
            <person name="Iemura S.I."/>
            <person name="Natsume T."/>
            <person name="Hara T."/>
            <person name="Mizushima N."/>
        </authorList>
    </citation>
    <scope>SUBUNIT</scope>
</reference>
<reference key="16">
    <citation type="journal article" date="2009" name="Mol. Biol. Cell">
        <title>Nutrient-dependent mTORC1 association with the ULK1-Atg13-FIP200 complex required for autophagy.</title>
        <authorList>
            <person name="Hosokawa N."/>
            <person name="Hara T."/>
            <person name="Kaizuka T."/>
            <person name="Kishi C."/>
            <person name="Takamura A."/>
            <person name="Miura Y."/>
            <person name="Iemura S."/>
            <person name="Natsume T."/>
            <person name="Takehana K."/>
            <person name="Yamada N."/>
            <person name="Guan J.L."/>
            <person name="Oshiro N."/>
            <person name="Mizushima N."/>
        </authorList>
    </citation>
    <scope>INTERACTION WITH ULK1 AND ATG13</scope>
</reference>
<reference key="17">
    <citation type="journal article" date="2009" name="Sci. Signal.">
        <title>Quantitative phosphoproteomic analysis of T cell receptor signaling reveals system-wide modulation of protein-protein interactions.</title>
        <authorList>
            <person name="Mayya V."/>
            <person name="Lundgren D.H."/>
            <person name="Hwang S.-I."/>
            <person name="Rezaul K."/>
            <person name="Wu L."/>
            <person name="Eng J.K."/>
            <person name="Rodionov V."/>
            <person name="Han D.K."/>
        </authorList>
    </citation>
    <scope>PHOSPHORYLATION [LARGE SCALE ANALYSIS] AT SER-243 AND SER-257</scope>
    <scope>IDENTIFICATION BY MASS SPECTROMETRY [LARGE SCALE ANALYSIS]</scope>
    <source>
        <tissue>Leukemic T-cell</tissue>
    </source>
</reference>
<reference key="18">
    <citation type="journal article" date="2010" name="Sci. Signal.">
        <title>Quantitative phosphoproteomics reveals widespread full phosphorylation site occupancy during mitosis.</title>
        <authorList>
            <person name="Olsen J.V."/>
            <person name="Vermeulen M."/>
            <person name="Santamaria A."/>
            <person name="Kumar C."/>
            <person name="Miller M.L."/>
            <person name="Jensen L.J."/>
            <person name="Gnad F."/>
            <person name="Cox J."/>
            <person name="Jensen T.S."/>
            <person name="Nigg E.A."/>
            <person name="Brunak S."/>
            <person name="Mann M."/>
        </authorList>
    </citation>
    <scope>IDENTIFICATION BY MASS SPECTROMETRY [LARGE SCALE ANALYSIS]</scope>
    <source>
        <tissue>Cervix carcinoma</tissue>
    </source>
</reference>
<reference key="19">
    <citation type="journal article" date="2011" name="BMC Syst. Biol.">
        <title>Initial characterization of the human central proteome.</title>
        <authorList>
            <person name="Burkard T.R."/>
            <person name="Planyavsky M."/>
            <person name="Kaupe I."/>
            <person name="Breitwieser F.P."/>
            <person name="Buerckstuemmer T."/>
            <person name="Bennett K.L."/>
            <person name="Superti-Furga G."/>
            <person name="Colinge J."/>
        </authorList>
    </citation>
    <scope>IDENTIFICATION BY MASS SPECTROMETRY [LARGE SCALE ANALYSIS]</scope>
</reference>
<reference key="20">
    <citation type="journal article" date="2011" name="Cell Cycle">
        <title>p53 inhibits autophagy by interacting with the human ortholog of yeast Atg17, RB1CC1/FIP200.</title>
        <authorList>
            <person name="Morselli E."/>
            <person name="Shen S."/>
            <person name="Ruckenstuhl C."/>
            <person name="Bauer M.A."/>
            <person name="Marino G."/>
            <person name="Galluzzi L."/>
            <person name="Criollo A."/>
            <person name="Michaud M."/>
            <person name="Maiuri M.C."/>
            <person name="Chano T."/>
            <person name="Madeo F."/>
            <person name="Kroemer G."/>
        </authorList>
    </citation>
    <scope>FUNCTION</scope>
    <scope>INTERACTION WITH TP53</scope>
</reference>
<reference key="21">
    <citation type="journal article" date="2011" name="Sci. Signal.">
        <title>System-wide temporal characterization of the proteome and phosphoproteome of human embryonic stem cell differentiation.</title>
        <authorList>
            <person name="Rigbolt K.T."/>
            <person name="Prokhorova T.A."/>
            <person name="Akimov V."/>
            <person name="Henningsen J."/>
            <person name="Johansen P.T."/>
            <person name="Kratchmarova I."/>
            <person name="Kassem M."/>
            <person name="Mann M."/>
            <person name="Olsen J.V."/>
            <person name="Blagoev B."/>
        </authorList>
    </citation>
    <scope>IDENTIFICATION BY MASS SPECTROMETRY [LARGE SCALE ANALYSIS]</scope>
</reference>
<reference key="22">
    <citation type="journal article" date="2012" name="J. Biol. Chem.">
        <title>ATG8 family proteins act as scaffolds for assembly of the ULK complex: sequence requirements for LC3-interacting region (LIR) motifs.</title>
        <authorList>
            <person name="Alemu E.A."/>
            <person name="Lamark T."/>
            <person name="Torgersen K.M."/>
            <person name="Birgisdottir A.B."/>
            <person name="Larsen K.B."/>
            <person name="Jain A."/>
            <person name="Olsvik H."/>
            <person name="Overvatn A."/>
            <person name="Kirkin V."/>
            <person name="Johansen T."/>
        </authorList>
    </citation>
    <scope>INTERACTION WITH GABARAP AND GABARAPL1</scope>
</reference>
<reference key="23">
    <citation type="journal article" date="2013" name="EMBO Rep.">
        <title>FIP200 regulates targeting of Atg16L1 to the isolation membrane.</title>
        <authorList>
            <person name="Nishimura T."/>
            <person name="Kaizuka T."/>
            <person name="Cadwell K."/>
            <person name="Sahani M.H."/>
            <person name="Saitoh T."/>
            <person name="Akira S."/>
            <person name="Virgin H.W."/>
            <person name="Mizushima N."/>
        </authorList>
    </citation>
    <scope>FUNCTION</scope>
    <scope>INTERACTION WITH ATG16L1</scope>
</reference>
<reference key="24">
    <citation type="journal article" date="2013" name="J. Proteome Res.">
        <title>Toward a comprehensive characterization of a human cancer cell phosphoproteome.</title>
        <authorList>
            <person name="Zhou H."/>
            <person name="Di Palma S."/>
            <person name="Preisinger C."/>
            <person name="Peng M."/>
            <person name="Polat A.N."/>
            <person name="Heck A.J."/>
            <person name="Mohammed S."/>
        </authorList>
    </citation>
    <scope>PHOSPHORYLATION [LARGE SCALE ANALYSIS] AT SER-222; SER-229; SER-237; SER-243; SER-253; SER-257; SER-266; SER-647; SER-652; SER-1222; SER-1370 AND SER-1484</scope>
    <scope>IDENTIFICATION BY MASS SPECTROMETRY [LARGE SCALE ANALYSIS]</scope>
    <source>
        <tissue>Cervix carcinoma</tissue>
        <tissue>Erythroleukemia</tissue>
    </source>
</reference>
<reference key="25">
    <citation type="journal article" date="2014" name="J. Proteomics">
        <title>An enzyme assisted RP-RPLC approach for in-depth analysis of human liver phosphoproteome.</title>
        <authorList>
            <person name="Bian Y."/>
            <person name="Song C."/>
            <person name="Cheng K."/>
            <person name="Dong M."/>
            <person name="Wang F."/>
            <person name="Huang J."/>
            <person name="Sun D."/>
            <person name="Wang L."/>
            <person name="Ye M."/>
            <person name="Zou H."/>
        </authorList>
    </citation>
    <scope>IDENTIFICATION BY MASS SPECTROMETRY [LARGE SCALE ANALYSIS]</scope>
    <source>
        <tissue>Liver</tissue>
    </source>
</reference>
<reference key="26">
    <citation type="journal article" date="2014" name="Mol. Cell">
        <title>WIPI2 links LC3 conjugation with PI3P, autophagosome formation, and pathogen clearance by recruiting Atg12-5-16L1.</title>
        <authorList>
            <person name="Dooley H.C."/>
            <person name="Razi M."/>
            <person name="Polson H.E."/>
            <person name="Girardin S.E."/>
            <person name="Wilson M.I."/>
            <person name="Tooze S.A."/>
        </authorList>
    </citation>
    <scope>INTERACTION WITH ATG16L1</scope>
</reference>
<reference key="27">
    <citation type="journal article" date="2013" name="BMC Biochem.">
        <title>The COP1 E3-ligase interacts with FIP200, a key regulator of mammalian autophagy.</title>
        <authorList>
            <person name="Kobayashi S."/>
            <person name="Yoneda-Kato N."/>
            <person name="Itahara N."/>
            <person name="Yoshida A."/>
            <person name="Kato J.Y."/>
        </authorList>
    </citation>
    <scope>INTERACTION WITH COP1</scope>
</reference>
<reference key="28">
    <citation type="journal article" date="2013" name="Nat. Struct. Mol. Biol.">
        <title>Interaction between FIP200 and ATG16L1 distinguishes ULK1 complex-dependent and -independent autophagy.</title>
        <authorList>
            <person name="Gammoh N."/>
            <person name="Florey O."/>
            <person name="Overholtzer M."/>
            <person name="Jiang X."/>
        </authorList>
    </citation>
    <scope>INTERACTION WITH ATG16L1</scope>
</reference>
<reference key="29">
    <citation type="journal article" date="2016" name="EMBO J.">
        <title>The C9orf72 protein interacts with Rab1a and the ULK1 complex to regulate initiation of autophagy.</title>
        <authorList>
            <person name="Webster C.P."/>
            <person name="Smith E.F."/>
            <person name="Bauer C.S."/>
            <person name="Moller A."/>
            <person name="Hautbergue G.M."/>
            <person name="Ferraiuolo L."/>
            <person name="Myszczynska M.A."/>
            <person name="Higginbottom A."/>
            <person name="Walsh M.J."/>
            <person name="Whitworth A.J."/>
            <person name="Kaspar B.K."/>
            <person name="Meyer K."/>
            <person name="Shaw P.J."/>
            <person name="Grierson A.J."/>
            <person name="De Vos K.J."/>
        </authorList>
    </citation>
    <scope>INTERACTION WITH C9ORF72</scope>
</reference>
<reference key="30">
    <citation type="journal article" date="2017" name="Mol. Cell">
        <title>The ER-Localized Transmembrane Protein EPG-3/VMP1 Regulates SERCA Activity to Control ER-Isolation Membrane Contacts for Autophagosome Formation.</title>
        <authorList>
            <person name="Zhao Y.G."/>
            <person name="Chen Y."/>
            <person name="Miao G."/>
            <person name="Zhao H."/>
            <person name="Qu W."/>
            <person name="Li D."/>
            <person name="Wang Z."/>
            <person name="Liu N."/>
            <person name="Li L."/>
            <person name="Chen S."/>
            <person name="Liu P."/>
            <person name="Feng D."/>
            <person name="Zhang H."/>
        </authorList>
    </citation>
    <scope>INTERACTION WITH WIPI2 AND ATG16L1</scope>
    <scope>SUBCELLULAR LOCATION</scope>
</reference>
<reference key="31">
    <citation type="journal article" date="2017" name="Nat. Commun.">
        <title>WIPI3 and WIPI4 beta-propellers are scaffolds for LKB1-AMPK-TSC signalling circuits in the control of autophagy.</title>
        <authorList>
            <person name="Bakula D."/>
            <person name="Mueller A.J."/>
            <person name="Zuleger T."/>
            <person name="Takacs Z."/>
            <person name="Franz-Wachtel M."/>
            <person name="Thost A.K."/>
            <person name="Brigger D."/>
            <person name="Tschan M.P."/>
            <person name="Frickey T."/>
            <person name="Robenek H."/>
            <person name="Macek B."/>
            <person name="Proikas-Cezanne T."/>
        </authorList>
    </citation>
    <scope>INTERACTION WITH WDR45B</scope>
    <scope>SUBCELLULAR LOCATION</scope>
</reference>
<reference key="32">
    <citation type="journal article" date="2019" name="Mol. Cell">
        <title>The ER-Localized Transmembrane Protein TMEM39A/SUSR2 Regulates Autophagy by Controlling the Trafficking of the PtdIns(4)P Phosphatase SAC1.</title>
        <authorList>
            <person name="Miao G."/>
            <person name="Zhang Y."/>
            <person name="Chen D."/>
            <person name="Zhang H."/>
        </authorList>
    </citation>
    <scope>INTERACTION WITH ATG13</scope>
</reference>
<reference key="33">
    <citation type="journal article" date="2020" name="EMBO J.">
        <title>Receptor-mediated clustering of FIP200 bypasses the role of LC3 lipidation in autophagy.</title>
        <authorList>
            <person name="Ohnstad A.E."/>
            <person name="Delgado J.M."/>
            <person name="North B.J."/>
            <person name="Nasa I."/>
            <person name="Kettenbach A.N."/>
            <person name="Schultz S.W."/>
            <person name="Shoemaker C.J."/>
        </authorList>
    </citation>
    <scope>INTERACTION WITH TAX1BP1</scope>
</reference>
<reference key="34">
    <citation type="journal article" date="2021" name="Nat. Commun.">
        <title>Reconstitution defines the roles of p62, NBR1 and TAX1BP1 in ubiquitin condensate formation and autophagy initiation.</title>
        <authorList>
            <person name="Turco E."/>
            <person name="Savova A."/>
            <person name="Gere F."/>
            <person name="Ferrari L."/>
            <person name="Romanov J."/>
            <person name="Schuschnig M."/>
            <person name="Martens S."/>
        </authorList>
    </citation>
    <scope>INTERACTION WITH TAX1BP1</scope>
</reference>
<reference key="35">
    <citation type="journal article" date="2020" name="EMBO J.">
        <title>FFAT motif phosphorylation controls formation and lipid transfer function of inter-organelle contacts.</title>
        <authorList>
            <person name="Di Mattia T."/>
            <person name="Martinet A."/>
            <person name="Ikhlef S."/>
            <person name="McEwen A.G."/>
            <person name="Nomine Y."/>
            <person name="Wendling C."/>
            <person name="Poussin-Courmontagne P."/>
            <person name="Voilquin L."/>
            <person name="Eberling P."/>
            <person name="Ruffenach F."/>
            <person name="Cavarelli J."/>
            <person name="Slee J."/>
            <person name="Levine T.P."/>
            <person name="Drin G."/>
            <person name="Tomasetto C."/>
            <person name="Alpy F."/>
        </authorList>
    </citation>
    <scope>INTERACTION WITH MOSPD2; VAPA AND VAPB</scope>
    <scope>FFAT MOTIF</scope>
    <scope>PHOSPHORYLATION AT SER-734</scope>
    <scope>DOMAIN</scope>
</reference>
<reference key="36">
    <citation type="journal article" date="2007" name="Breast Cancer Res.">
        <title>Somatic sequence alterations in twenty-one genes selected by expression profile analysis of breast carcinomas.</title>
        <authorList>
            <person name="Chanock S.J."/>
            <person name="Burdett L."/>
            <person name="Yeager M."/>
            <person name="Llaca V."/>
            <person name="Langeroed A."/>
            <person name="Presswalla S."/>
            <person name="Kaaresen R."/>
            <person name="Strausberg R.L."/>
            <person name="Gerhard D.S."/>
            <person name="Kristensen V."/>
            <person name="Perou C.M."/>
            <person name="Boerresen-Dale A.-L."/>
        </authorList>
    </citation>
    <scope>VARIANT CYS-1514</scope>
</reference>
<accession>Q8TDY2</accession>
<accession>Q86YR4</accession>
<accession>Q8WVU9</accession>
<accession>Q92601</accession>
<evidence type="ECO:0000250" key="1">
    <source>
        <dbReference type="UniProtKB" id="Q9ESK9"/>
    </source>
</evidence>
<evidence type="ECO:0000255" key="2"/>
<evidence type="ECO:0000256" key="3">
    <source>
        <dbReference type="SAM" id="MobiDB-lite"/>
    </source>
</evidence>
<evidence type="ECO:0000269" key="4">
    <source>
    </source>
</evidence>
<evidence type="ECO:0000269" key="5">
    <source>
    </source>
</evidence>
<evidence type="ECO:0000269" key="6">
    <source>
    </source>
</evidence>
<evidence type="ECO:0000269" key="7">
    <source>
    </source>
</evidence>
<evidence type="ECO:0000269" key="8">
    <source>
    </source>
</evidence>
<evidence type="ECO:0000269" key="9">
    <source>
    </source>
</evidence>
<evidence type="ECO:0000269" key="10">
    <source>
    </source>
</evidence>
<evidence type="ECO:0000269" key="11">
    <source>
    </source>
</evidence>
<evidence type="ECO:0000269" key="12">
    <source>
    </source>
</evidence>
<evidence type="ECO:0000269" key="13">
    <source>
    </source>
</evidence>
<evidence type="ECO:0000269" key="14">
    <source>
    </source>
</evidence>
<evidence type="ECO:0000269" key="15">
    <source>
    </source>
</evidence>
<evidence type="ECO:0000269" key="16">
    <source>
    </source>
</evidence>
<evidence type="ECO:0000269" key="17">
    <source>
    </source>
</evidence>
<evidence type="ECO:0000269" key="18">
    <source>
    </source>
</evidence>
<evidence type="ECO:0000269" key="19">
    <source>
    </source>
</evidence>
<evidence type="ECO:0000269" key="20">
    <source>
    </source>
</evidence>
<evidence type="ECO:0000269" key="21">
    <source>
    </source>
</evidence>
<evidence type="ECO:0000269" key="22">
    <source>
    </source>
</evidence>
<evidence type="ECO:0000269" key="23">
    <source>
    </source>
</evidence>
<evidence type="ECO:0000269" key="24">
    <source>
    </source>
</evidence>
<evidence type="ECO:0000269" key="25">
    <source>
    </source>
</evidence>
<evidence type="ECO:0000269" key="26">
    <source>
    </source>
</evidence>
<evidence type="ECO:0000269" key="27">
    <source>
    </source>
</evidence>
<evidence type="ECO:0000303" key="28">
    <source>
    </source>
</evidence>
<evidence type="ECO:0000303" key="29">
    <source>
    </source>
</evidence>
<evidence type="ECO:0000305" key="30"/>
<evidence type="ECO:0000305" key="31">
    <source>
    </source>
</evidence>
<evidence type="ECO:0000312" key="32">
    <source>
        <dbReference type="HGNC" id="HGNC:15574"/>
    </source>
</evidence>
<evidence type="ECO:0007744" key="33">
    <source>
    </source>
</evidence>
<evidence type="ECO:0007744" key="34">
    <source>
    </source>
</evidence>
<evidence type="ECO:0007744" key="35">
    <source>
    </source>
</evidence>
<evidence type="ECO:0007829" key="36">
    <source>
        <dbReference type="PDB" id="6GMA"/>
    </source>
</evidence>
<evidence type="ECO:0007829" key="37">
    <source>
        <dbReference type="PDB" id="7D0E"/>
    </source>
</evidence>
<evidence type="ECO:0007829" key="38">
    <source>
        <dbReference type="PDB" id="7EA2"/>
    </source>
</evidence>
<evidence type="ECO:0007829" key="39">
    <source>
        <dbReference type="PDB" id="7EAA"/>
    </source>
</evidence>
<evidence type="ECO:0007829" key="40">
    <source>
        <dbReference type="PDB" id="8YFK"/>
    </source>
</evidence>